<gene>
    <name type="primary">ompB</name>
    <name type="synonym">porB</name>
    <name type="ordered locus">CT_713</name>
</gene>
<feature type="signal peptide">
    <location>
        <begin position="1"/>
        <end position="26"/>
    </location>
</feature>
<feature type="chain" id="PRO_0000020156" description="Outer membrane protein B">
    <location>
        <begin position="27"/>
        <end position="340"/>
    </location>
</feature>
<name>OMP2_CHLTR</name>
<reference key="1">
    <citation type="journal article" date="1998" name="Science">
        <title>Genome sequence of an obligate intracellular pathogen of humans: Chlamydia trachomatis.</title>
        <authorList>
            <person name="Stephens R.S."/>
            <person name="Kalman S."/>
            <person name="Lammel C.J."/>
            <person name="Fan J."/>
            <person name="Marathe R."/>
            <person name="Aravind L."/>
            <person name="Mitchell W.P."/>
            <person name="Olinger L."/>
            <person name="Tatusov R.L."/>
            <person name="Zhao Q."/>
            <person name="Koonin E.V."/>
            <person name="Davis R.W."/>
        </authorList>
    </citation>
    <scope>NUCLEOTIDE SEQUENCE [LARGE SCALE GENOMIC DNA]</scope>
    <source>
        <strain>ATCC VR-885 / DSM 19411 / UW-3/Cx</strain>
    </source>
</reference>
<reference key="2">
    <citation type="submission" date="1994-09" db="UniProtKB">
        <authorList>
            <person name="Bini L."/>
            <person name="Santucci A."/>
            <person name="Magi B."/>
            <person name="Marzocchi B."/>
            <person name="Sanchez-Campillo M."/>
            <person name="Comanducci M."/>
            <person name="Christianen G."/>
            <person name="Birkelund S."/>
            <person name="Vtretou E."/>
            <person name="Ratti G."/>
            <person name="Pallini V."/>
        </authorList>
    </citation>
    <scope>NUCLEOTIDE SEQUENCE [GENOMIC DNA] OF 27-36</scope>
    <source>
        <strain>L2/434/Bu</strain>
    </source>
</reference>
<accession>P38006</accession>
<accession>P56827</accession>
<keyword id="KW-0998">Cell outer membrane</keyword>
<keyword id="KW-0406">Ion transport</keyword>
<keyword id="KW-0472">Membrane</keyword>
<keyword id="KW-0626">Porin</keyword>
<keyword id="KW-1185">Reference proteome</keyword>
<keyword id="KW-0732">Signal</keyword>
<keyword id="KW-0812">Transmembrane</keyword>
<keyword id="KW-1134">Transmembrane beta strand</keyword>
<keyword id="KW-0813">Transport</keyword>
<comment type="subcellular location">
    <subcellularLocation>
        <location>Cell outer membrane</location>
        <topology>Multi-pass membrane protein</topology>
    </subcellularLocation>
    <text>Outer membrane of elementary body.</text>
</comment>
<comment type="similarity">
    <text evidence="1">Belongs to the chlamydial OMP family.</text>
</comment>
<organism>
    <name type="scientific">Chlamydia trachomatis serovar D (strain ATCC VR-885 / DSM 19411 / UW-3/Cx)</name>
    <dbReference type="NCBI Taxonomy" id="272561"/>
    <lineage>
        <taxon>Bacteria</taxon>
        <taxon>Pseudomonadati</taxon>
        <taxon>Chlamydiota</taxon>
        <taxon>Chlamydiia</taxon>
        <taxon>Chlamydiales</taxon>
        <taxon>Chlamydiaceae</taxon>
        <taxon>Chlamydia/Chlamydophila group</taxon>
        <taxon>Chlamydia</taxon>
    </lineage>
</organism>
<evidence type="ECO:0000305" key="1"/>
<protein>
    <recommendedName>
        <fullName>Outer membrane protein B</fullName>
    </recommendedName>
</protein>
<sequence length="340" mass="37393">MSSKLVNYLRLTFLSFLGIASTSLDAMPAGNPAFPVIPGINIEQKNACSFDLCNSYDVLSALSGNLKLCFCGDYIFSEEAQVKDVPVVTSVTTAGVGPSPDITSTTKTRNFDLVNCNLNTNCVAVAFSLPDRSLSAIPLFDVSFEVKVGGLKQYYRLPMNAYRDFTSEPLNSESEVTDGMIEVQSNYGFVWDVSLKKVIWKDGVSFVGVGADYRHASCPIDYIIANSQANPEVFIADSDGKLNFKEWSVCVGLTTYVNDYVLPYLAFSIGSVSRQAPDDSFKKLEDRFTNLKFKVRKITSSHRGNICIGATNYVADNFFYNVEGRWGSQRAVNVSGGFQF</sequence>
<proteinExistence type="inferred from homology"/>
<dbReference type="EMBL" id="AE001273">
    <property type="protein sequence ID" value="AAC68308.1"/>
    <property type="molecule type" value="Genomic_DNA"/>
</dbReference>
<dbReference type="PIR" id="H71479">
    <property type="entry name" value="H71479"/>
</dbReference>
<dbReference type="RefSeq" id="NP_220232.1">
    <property type="nucleotide sequence ID" value="NC_000117.1"/>
</dbReference>
<dbReference type="RefSeq" id="WP_010725314.1">
    <property type="nucleotide sequence ID" value="NC_000117.1"/>
</dbReference>
<dbReference type="STRING" id="272561.CT_713"/>
<dbReference type="EnsemblBacteria" id="AAC68308">
    <property type="protein sequence ID" value="AAC68308"/>
    <property type="gene ID" value="CT_713"/>
</dbReference>
<dbReference type="GeneID" id="884503"/>
<dbReference type="KEGG" id="ctr:CT_713"/>
<dbReference type="PATRIC" id="fig|272561.5.peg.785"/>
<dbReference type="HOGENOM" id="CLU_815590_0_0_0"/>
<dbReference type="InParanoid" id="P38006"/>
<dbReference type="OrthoDB" id="17228at2"/>
<dbReference type="Proteomes" id="UP000000431">
    <property type="component" value="Chromosome"/>
</dbReference>
<dbReference type="GO" id="GO:0009279">
    <property type="term" value="C:cell outer membrane"/>
    <property type="evidence" value="ECO:0007669"/>
    <property type="project" value="UniProtKB-SubCell"/>
</dbReference>
<dbReference type="GO" id="GO:0046930">
    <property type="term" value="C:pore complex"/>
    <property type="evidence" value="ECO:0007669"/>
    <property type="project" value="UniProtKB-KW"/>
</dbReference>
<dbReference type="GO" id="GO:0015288">
    <property type="term" value="F:porin activity"/>
    <property type="evidence" value="ECO:0007669"/>
    <property type="project" value="UniProtKB-KW"/>
</dbReference>
<dbReference type="GO" id="GO:0005198">
    <property type="term" value="F:structural molecule activity"/>
    <property type="evidence" value="ECO:0007669"/>
    <property type="project" value="InterPro"/>
</dbReference>
<dbReference type="GO" id="GO:0006811">
    <property type="term" value="P:monoatomic ion transport"/>
    <property type="evidence" value="ECO:0007669"/>
    <property type="project" value="UniProtKB-KW"/>
</dbReference>
<dbReference type="InterPro" id="IPR000604">
    <property type="entry name" value="Major_OMP_Chlamydia"/>
</dbReference>
<dbReference type="Pfam" id="PF01308">
    <property type="entry name" value="Chlam_OMP"/>
    <property type="match status" value="1"/>
</dbReference>